<feature type="chain" id="PRO_0000375448" description="Succinyl-diaminopimelate desuccinylase">
    <location>
        <begin position="1"/>
        <end position="377"/>
    </location>
</feature>
<feature type="active site" evidence="1">
    <location>
        <position position="70"/>
    </location>
</feature>
<feature type="active site" description="Proton acceptor" evidence="1">
    <location>
        <position position="135"/>
    </location>
</feature>
<feature type="binding site" evidence="1">
    <location>
        <position position="68"/>
    </location>
    <ligand>
        <name>Zn(2+)</name>
        <dbReference type="ChEBI" id="CHEBI:29105"/>
        <label>1</label>
    </ligand>
</feature>
<feature type="binding site" evidence="1">
    <location>
        <position position="101"/>
    </location>
    <ligand>
        <name>Zn(2+)</name>
        <dbReference type="ChEBI" id="CHEBI:29105"/>
        <label>1</label>
    </ligand>
</feature>
<feature type="binding site" evidence="1">
    <location>
        <position position="101"/>
    </location>
    <ligand>
        <name>Zn(2+)</name>
        <dbReference type="ChEBI" id="CHEBI:29105"/>
        <label>2</label>
    </ligand>
</feature>
<feature type="binding site" evidence="1">
    <location>
        <position position="136"/>
    </location>
    <ligand>
        <name>Zn(2+)</name>
        <dbReference type="ChEBI" id="CHEBI:29105"/>
        <label>2</label>
    </ligand>
</feature>
<feature type="binding site" evidence="1">
    <location>
        <position position="164"/>
    </location>
    <ligand>
        <name>Zn(2+)</name>
        <dbReference type="ChEBI" id="CHEBI:29105"/>
        <label>1</label>
    </ligand>
</feature>
<feature type="binding site" evidence="1">
    <location>
        <position position="350"/>
    </location>
    <ligand>
        <name>Zn(2+)</name>
        <dbReference type="ChEBI" id="CHEBI:29105"/>
        <label>2</label>
    </ligand>
</feature>
<accession>Q6FE14</accession>
<protein>
    <recommendedName>
        <fullName evidence="1">Succinyl-diaminopimelate desuccinylase</fullName>
        <shortName evidence="1">SDAP desuccinylase</shortName>
        <ecNumber evidence="1">3.5.1.18</ecNumber>
    </recommendedName>
    <alternativeName>
        <fullName evidence="1">N-succinyl-LL-2,6-diaminoheptanedioate amidohydrolase</fullName>
    </alternativeName>
</protein>
<name>DAPE_ACIAD</name>
<gene>
    <name evidence="1" type="primary">dapE</name>
    <name type="ordered locus">ACIAD0791</name>
</gene>
<sequence>MNRSDTLDLSLNLMRRPSVTPEDHDCQAVMAERLAKAGFQIENMRFDDVDNLWARRGTQQPVFCFAGHTDVVPTGNLDNWNSDPFAPEVRDGILYGRGAADMKTALAAMVVASERFVEKHPNHKGSIAFLITSDEEGPSINGTVKVIETLEARHEKMTWCLVGEPSSTHQLGDIIKNGRRGSLNAVLTIKGKQGHVAYPHLARNPIHLASAAIHELCETVWDQGNEYFPATSFQISNIHAGTGATNVVPGTMAVTFNFRYSTEVTAEQLKERVVEVLQRHGLDYDIVWTHSGLPFLTPVGELVNAATHAIKTVTGVDTQLSTSGGTSDGRFIAPTGAQVLELGVLNASIHQINEHVNVADLEPLAEIYEKILEQLLA</sequence>
<comment type="function">
    <text evidence="1">Catalyzes the hydrolysis of N-succinyl-L,L-diaminopimelic acid (SDAP), forming succinate and LL-2,6-diaminopimelate (DAP), an intermediate involved in the bacterial biosynthesis of lysine and meso-diaminopimelic acid, an essential component of bacterial cell walls.</text>
</comment>
<comment type="catalytic activity">
    <reaction evidence="1">
        <text>N-succinyl-(2S,6S)-2,6-diaminopimelate + H2O = (2S,6S)-2,6-diaminopimelate + succinate</text>
        <dbReference type="Rhea" id="RHEA:22608"/>
        <dbReference type="ChEBI" id="CHEBI:15377"/>
        <dbReference type="ChEBI" id="CHEBI:30031"/>
        <dbReference type="ChEBI" id="CHEBI:57609"/>
        <dbReference type="ChEBI" id="CHEBI:58087"/>
        <dbReference type="EC" id="3.5.1.18"/>
    </reaction>
</comment>
<comment type="cofactor">
    <cofactor evidence="1">
        <name>Zn(2+)</name>
        <dbReference type="ChEBI" id="CHEBI:29105"/>
    </cofactor>
    <cofactor evidence="1">
        <name>Co(2+)</name>
        <dbReference type="ChEBI" id="CHEBI:48828"/>
    </cofactor>
    <text evidence="1">Binds 2 Zn(2+) or Co(2+) ions per subunit.</text>
</comment>
<comment type="pathway">
    <text evidence="1">Amino-acid biosynthesis; L-lysine biosynthesis via DAP pathway; LL-2,6-diaminopimelate from (S)-tetrahydrodipicolinate (succinylase route): step 3/3.</text>
</comment>
<comment type="subunit">
    <text evidence="1">Homodimer.</text>
</comment>
<comment type="similarity">
    <text evidence="1">Belongs to the peptidase M20A family. DapE subfamily.</text>
</comment>
<organism>
    <name type="scientific">Acinetobacter baylyi (strain ATCC 33305 / BD413 / ADP1)</name>
    <dbReference type="NCBI Taxonomy" id="62977"/>
    <lineage>
        <taxon>Bacteria</taxon>
        <taxon>Pseudomonadati</taxon>
        <taxon>Pseudomonadota</taxon>
        <taxon>Gammaproteobacteria</taxon>
        <taxon>Moraxellales</taxon>
        <taxon>Moraxellaceae</taxon>
        <taxon>Acinetobacter</taxon>
    </lineage>
</organism>
<proteinExistence type="inferred from homology"/>
<reference key="1">
    <citation type="journal article" date="2004" name="Nucleic Acids Res.">
        <title>Unique features revealed by the genome sequence of Acinetobacter sp. ADP1, a versatile and naturally transformation competent bacterium.</title>
        <authorList>
            <person name="Barbe V."/>
            <person name="Vallenet D."/>
            <person name="Fonknechten N."/>
            <person name="Kreimeyer A."/>
            <person name="Oztas S."/>
            <person name="Labarre L."/>
            <person name="Cruveiller S."/>
            <person name="Robert C."/>
            <person name="Duprat S."/>
            <person name="Wincker P."/>
            <person name="Ornston L.N."/>
            <person name="Weissenbach J."/>
            <person name="Marliere P."/>
            <person name="Cohen G.N."/>
            <person name="Medigue C."/>
        </authorList>
    </citation>
    <scope>NUCLEOTIDE SEQUENCE [LARGE SCALE GENOMIC DNA]</scope>
    <source>
        <strain>ATCC 33305 / BD413 / ADP1</strain>
    </source>
</reference>
<keyword id="KW-0028">Amino-acid biosynthesis</keyword>
<keyword id="KW-0170">Cobalt</keyword>
<keyword id="KW-0220">Diaminopimelate biosynthesis</keyword>
<keyword id="KW-0378">Hydrolase</keyword>
<keyword id="KW-0457">Lysine biosynthesis</keyword>
<keyword id="KW-0479">Metal-binding</keyword>
<keyword id="KW-0862">Zinc</keyword>
<dbReference type="EC" id="3.5.1.18" evidence="1"/>
<dbReference type="EMBL" id="CR543861">
    <property type="protein sequence ID" value="CAG67694.1"/>
    <property type="molecule type" value="Genomic_DNA"/>
</dbReference>
<dbReference type="RefSeq" id="WP_004922360.1">
    <property type="nucleotide sequence ID" value="NC_005966.1"/>
</dbReference>
<dbReference type="SMR" id="Q6FE14"/>
<dbReference type="STRING" id="202950.GCA_001485005_02545"/>
<dbReference type="GeneID" id="45233254"/>
<dbReference type="KEGG" id="aci:ACIAD0791"/>
<dbReference type="eggNOG" id="COG0624">
    <property type="taxonomic scope" value="Bacteria"/>
</dbReference>
<dbReference type="HOGENOM" id="CLU_021802_4_0_6"/>
<dbReference type="OrthoDB" id="9809784at2"/>
<dbReference type="BioCyc" id="ASP62977:ACIAD_RS03630-MONOMER"/>
<dbReference type="UniPathway" id="UPA00034">
    <property type="reaction ID" value="UER00021"/>
</dbReference>
<dbReference type="Proteomes" id="UP000000430">
    <property type="component" value="Chromosome"/>
</dbReference>
<dbReference type="GO" id="GO:0008777">
    <property type="term" value="F:acetylornithine deacetylase activity"/>
    <property type="evidence" value="ECO:0007669"/>
    <property type="project" value="TreeGrafter"/>
</dbReference>
<dbReference type="GO" id="GO:0050897">
    <property type="term" value="F:cobalt ion binding"/>
    <property type="evidence" value="ECO:0007669"/>
    <property type="project" value="UniProtKB-UniRule"/>
</dbReference>
<dbReference type="GO" id="GO:0009014">
    <property type="term" value="F:succinyl-diaminopimelate desuccinylase activity"/>
    <property type="evidence" value="ECO:0007669"/>
    <property type="project" value="UniProtKB-UniRule"/>
</dbReference>
<dbReference type="GO" id="GO:0008270">
    <property type="term" value="F:zinc ion binding"/>
    <property type="evidence" value="ECO:0007669"/>
    <property type="project" value="UniProtKB-UniRule"/>
</dbReference>
<dbReference type="GO" id="GO:0019877">
    <property type="term" value="P:diaminopimelate biosynthetic process"/>
    <property type="evidence" value="ECO:0007669"/>
    <property type="project" value="UniProtKB-UniRule"/>
</dbReference>
<dbReference type="GO" id="GO:0006526">
    <property type="term" value="P:L-arginine biosynthetic process"/>
    <property type="evidence" value="ECO:0007669"/>
    <property type="project" value="TreeGrafter"/>
</dbReference>
<dbReference type="GO" id="GO:0009089">
    <property type="term" value="P:lysine biosynthetic process via diaminopimelate"/>
    <property type="evidence" value="ECO:0007669"/>
    <property type="project" value="UniProtKB-UniRule"/>
</dbReference>
<dbReference type="CDD" id="cd03891">
    <property type="entry name" value="M20_DapE_proteobac"/>
    <property type="match status" value="1"/>
</dbReference>
<dbReference type="FunFam" id="3.30.70.360:FF:000011">
    <property type="entry name" value="Succinyl-diaminopimelate desuccinylase"/>
    <property type="match status" value="1"/>
</dbReference>
<dbReference type="FunFam" id="3.40.630.10:FF:000005">
    <property type="entry name" value="Succinyl-diaminopimelate desuccinylase"/>
    <property type="match status" value="1"/>
</dbReference>
<dbReference type="Gene3D" id="3.40.630.10">
    <property type="entry name" value="Zn peptidases"/>
    <property type="match status" value="2"/>
</dbReference>
<dbReference type="HAMAP" id="MF_01690">
    <property type="entry name" value="DapE"/>
    <property type="match status" value="1"/>
</dbReference>
<dbReference type="InterPro" id="IPR036264">
    <property type="entry name" value="Bact_exopeptidase_dim_dom"/>
</dbReference>
<dbReference type="InterPro" id="IPR005941">
    <property type="entry name" value="DapE_proteobac"/>
</dbReference>
<dbReference type="InterPro" id="IPR002933">
    <property type="entry name" value="Peptidase_M20"/>
</dbReference>
<dbReference type="InterPro" id="IPR011650">
    <property type="entry name" value="Peptidase_M20_dimer"/>
</dbReference>
<dbReference type="InterPro" id="IPR050072">
    <property type="entry name" value="Peptidase_M20A"/>
</dbReference>
<dbReference type="NCBIfam" id="TIGR01246">
    <property type="entry name" value="dapE_proteo"/>
    <property type="match status" value="1"/>
</dbReference>
<dbReference type="NCBIfam" id="NF009557">
    <property type="entry name" value="PRK13009.1"/>
    <property type="match status" value="1"/>
</dbReference>
<dbReference type="PANTHER" id="PTHR43808">
    <property type="entry name" value="ACETYLORNITHINE DEACETYLASE"/>
    <property type="match status" value="1"/>
</dbReference>
<dbReference type="PANTHER" id="PTHR43808:SF31">
    <property type="entry name" value="N-ACETYL-L-CITRULLINE DEACETYLASE"/>
    <property type="match status" value="1"/>
</dbReference>
<dbReference type="Pfam" id="PF07687">
    <property type="entry name" value="M20_dimer"/>
    <property type="match status" value="1"/>
</dbReference>
<dbReference type="Pfam" id="PF01546">
    <property type="entry name" value="Peptidase_M20"/>
    <property type="match status" value="1"/>
</dbReference>
<dbReference type="SUPFAM" id="SSF55031">
    <property type="entry name" value="Bacterial exopeptidase dimerisation domain"/>
    <property type="match status" value="1"/>
</dbReference>
<dbReference type="SUPFAM" id="SSF53187">
    <property type="entry name" value="Zn-dependent exopeptidases"/>
    <property type="match status" value="1"/>
</dbReference>
<evidence type="ECO:0000255" key="1">
    <source>
        <dbReference type="HAMAP-Rule" id="MF_01690"/>
    </source>
</evidence>